<feature type="chain" id="PRO_0000354388" description="Small ribosomal subunit protein uS14">
    <location>
        <begin position="1"/>
        <end position="89"/>
    </location>
</feature>
<protein>
    <recommendedName>
        <fullName evidence="1">Small ribosomal subunit protein uS14</fullName>
    </recommendedName>
    <alternativeName>
        <fullName evidence="2">30S ribosomal protein S14</fullName>
    </alternativeName>
</protein>
<reference key="1">
    <citation type="journal article" date="2004" name="Nat. Genet.">
        <title>Reductive evolution suggested from the complete genome sequence of a plant-pathogenic phytoplasma.</title>
        <authorList>
            <person name="Oshima K."/>
            <person name="Kakizawa S."/>
            <person name="Nishigawa H."/>
            <person name="Jung H.-Y."/>
            <person name="Wei W."/>
            <person name="Suzuki S."/>
            <person name="Arashida R."/>
            <person name="Nakata D."/>
            <person name="Miyata S."/>
            <person name="Ugaki M."/>
            <person name="Namba S."/>
        </authorList>
    </citation>
    <scope>NUCLEOTIDE SEQUENCE [LARGE SCALE GENOMIC DNA]</scope>
    <source>
        <strain>OY-M</strain>
    </source>
</reference>
<dbReference type="EMBL" id="AP006628">
    <property type="protein sequence ID" value="BAD04298.1"/>
    <property type="molecule type" value="Genomic_DNA"/>
</dbReference>
<dbReference type="SMR" id="Q6YR09"/>
<dbReference type="STRING" id="262768.PAM_213"/>
<dbReference type="KEGG" id="poy:PAM_213"/>
<dbReference type="eggNOG" id="COG0199">
    <property type="taxonomic scope" value="Bacteria"/>
</dbReference>
<dbReference type="HOGENOM" id="CLU_139869_0_0_14"/>
<dbReference type="BioCyc" id="OYEL262768:G1G26-259-MONOMER"/>
<dbReference type="Proteomes" id="UP000002523">
    <property type="component" value="Chromosome"/>
</dbReference>
<dbReference type="GO" id="GO:0005737">
    <property type="term" value="C:cytoplasm"/>
    <property type="evidence" value="ECO:0007669"/>
    <property type="project" value="UniProtKB-ARBA"/>
</dbReference>
<dbReference type="GO" id="GO:0015935">
    <property type="term" value="C:small ribosomal subunit"/>
    <property type="evidence" value="ECO:0007669"/>
    <property type="project" value="TreeGrafter"/>
</dbReference>
<dbReference type="GO" id="GO:0019843">
    <property type="term" value="F:rRNA binding"/>
    <property type="evidence" value="ECO:0007669"/>
    <property type="project" value="UniProtKB-UniRule"/>
</dbReference>
<dbReference type="GO" id="GO:0003735">
    <property type="term" value="F:structural constituent of ribosome"/>
    <property type="evidence" value="ECO:0007669"/>
    <property type="project" value="InterPro"/>
</dbReference>
<dbReference type="GO" id="GO:0006412">
    <property type="term" value="P:translation"/>
    <property type="evidence" value="ECO:0007669"/>
    <property type="project" value="UniProtKB-UniRule"/>
</dbReference>
<dbReference type="Gene3D" id="4.10.830.10">
    <property type="entry name" value="30s Ribosomal Protein S14, Chain N"/>
    <property type="match status" value="1"/>
</dbReference>
<dbReference type="HAMAP" id="MF_00537">
    <property type="entry name" value="Ribosomal_uS14_1"/>
    <property type="match status" value="1"/>
</dbReference>
<dbReference type="InterPro" id="IPR001209">
    <property type="entry name" value="Ribosomal_uS14"/>
</dbReference>
<dbReference type="InterPro" id="IPR023036">
    <property type="entry name" value="Ribosomal_uS14_bac/plastid"/>
</dbReference>
<dbReference type="InterPro" id="IPR043140">
    <property type="entry name" value="Ribosomal_uS14_sf"/>
</dbReference>
<dbReference type="NCBIfam" id="NF006477">
    <property type="entry name" value="PRK08881.1"/>
    <property type="match status" value="1"/>
</dbReference>
<dbReference type="PANTHER" id="PTHR19836">
    <property type="entry name" value="30S RIBOSOMAL PROTEIN S14"/>
    <property type="match status" value="1"/>
</dbReference>
<dbReference type="PANTHER" id="PTHR19836:SF19">
    <property type="entry name" value="SMALL RIBOSOMAL SUBUNIT PROTEIN US14M"/>
    <property type="match status" value="1"/>
</dbReference>
<dbReference type="Pfam" id="PF00253">
    <property type="entry name" value="Ribosomal_S14"/>
    <property type="match status" value="1"/>
</dbReference>
<dbReference type="SUPFAM" id="SSF57716">
    <property type="entry name" value="Glucocorticoid receptor-like (DNA-binding domain)"/>
    <property type="match status" value="1"/>
</dbReference>
<gene>
    <name evidence="1" type="primary">rpsN</name>
    <name type="synonym">pam213</name>
    <name type="ordered locus">PAM_213</name>
</gene>
<accession>Q6YR09</accession>
<organism>
    <name type="scientific">Onion yellows phytoplasma (strain OY-M)</name>
    <dbReference type="NCBI Taxonomy" id="262768"/>
    <lineage>
        <taxon>Bacteria</taxon>
        <taxon>Bacillati</taxon>
        <taxon>Mycoplasmatota</taxon>
        <taxon>Mollicutes</taxon>
        <taxon>Acholeplasmatales</taxon>
        <taxon>Acholeplasmataceae</taxon>
        <taxon>Candidatus Phytoplasma</taxon>
        <taxon>16SrI (Aster yellows group)</taxon>
    </lineage>
</organism>
<evidence type="ECO:0000255" key="1">
    <source>
        <dbReference type="HAMAP-Rule" id="MF_00537"/>
    </source>
</evidence>
<evidence type="ECO:0000305" key="2"/>
<comment type="function">
    <text evidence="1">Binds 16S rRNA, required for the assembly of 30S particles and may also be responsible for determining the conformation of the 16S rRNA at the A site.</text>
</comment>
<comment type="subunit">
    <text evidence="1">Part of the 30S ribosomal subunit. Contacts proteins S3 and S10.</text>
</comment>
<comment type="similarity">
    <text evidence="1">Belongs to the universal ribosomal protein uS14 family.</text>
</comment>
<proteinExistence type="inferred from homology"/>
<name>RS14_ONYPE</name>
<sequence length="89" mass="10274">MAKKSKIVKDQKQRELVLKYAKLRLELKKKADYAGLSQIPAKASPVRLKNRDSIDGRPRGYIRKFGISRINFRQLAHQGKLPGVRKTSW</sequence>
<keyword id="KW-0687">Ribonucleoprotein</keyword>
<keyword id="KW-0689">Ribosomal protein</keyword>
<keyword id="KW-0694">RNA-binding</keyword>
<keyword id="KW-0699">rRNA-binding</keyword>